<accession>P29662</accession>
<protein>
    <recommendedName>
        <fullName>Cytochrome c oxidase subunit 2</fullName>
        <ecNumber>7.1.1.9</ecNumber>
    </recommendedName>
    <alternativeName>
        <fullName>Cytochrome c oxidase polypeptide II</fullName>
    </alternativeName>
</protein>
<gene>
    <name type="primary">mt-co2</name>
    <name type="synonym">coii</name>
    <name type="synonym">coxii</name>
    <name type="synonym">mtco2</name>
</gene>
<organism>
    <name type="scientific">Scaphirhynchus platorynchus</name>
    <name type="common">Shovelnose sturgeon</name>
    <name type="synonym">Acipenser platorynchus</name>
    <dbReference type="NCBI Taxonomy" id="7910"/>
    <lineage>
        <taxon>Eukaryota</taxon>
        <taxon>Metazoa</taxon>
        <taxon>Chordata</taxon>
        <taxon>Craniata</taxon>
        <taxon>Vertebrata</taxon>
        <taxon>Euteleostomi</taxon>
        <taxon>Actinopterygii</taxon>
        <taxon>Chondrostei</taxon>
        <taxon>Acipenseriformes</taxon>
        <taxon>Acipenseridae</taxon>
        <taxon>Scaphirhynchus</taxon>
    </lineage>
</organism>
<reference key="1">
    <citation type="journal article" date="1991" name="Mol. Biol. Evol.">
        <title>Phylogenetic relationships of neopterygian fishes, inferred from mitochondrial DNA sequences.</title>
        <authorList>
            <person name="Normark B.B."/>
            <person name="McCune A.R."/>
            <person name="Harrison R.G."/>
        </authorList>
    </citation>
    <scope>NUCLEOTIDE SEQUENCE [GENOMIC DNA]</scope>
</reference>
<geneLocation type="mitochondrion"/>
<sequence length="64" mass="7239">MAHPSQLGFQDAASPVMEELXHFHDHTLMIVFLISTLVXYIIVAMVSTKLTNKYVLDSQEIEIV</sequence>
<comment type="function">
    <text evidence="2">Component of the cytochrome c oxidase, the last enzyme in the mitochondrial electron transport chain which drives oxidative phosphorylation. The respiratory chain contains 3 multisubunit complexes succinate dehydrogenase (complex II, CII), ubiquinol-cytochrome c oxidoreductase (cytochrome b-c1 complex, complex III, CIII) and cytochrome c oxidase (complex IV, CIV), that cooperate to transfer electrons derived from NADH and succinate to molecular oxygen, creating an electrochemical gradient over the inner membrane that drives transmembrane transport and the ATP synthase. Cytochrome c oxidase is the component of the respiratory chain that catalyzes the reduction of oxygen to water. Electrons originating from reduced cytochrome c in the intermembrane space (IMS) are transferred via the dinuclear copper A center (CU(A)) of subunit 2 and heme A of subunit 1 to the active site in subunit 1, a binuclear center (BNC) formed by heme A3 and copper B (CU(B)). The BNC reduces molecular oxygen to 2 water molecules using 4 electrons from cytochrome c in the IMS and 4 protons from the mitochondrial matrix.</text>
</comment>
<comment type="catalytic activity">
    <reaction evidence="2">
        <text>4 Fe(II)-[cytochrome c] + O2 + 8 H(+)(in) = 4 Fe(III)-[cytochrome c] + 2 H2O + 4 H(+)(out)</text>
        <dbReference type="Rhea" id="RHEA:11436"/>
        <dbReference type="Rhea" id="RHEA-COMP:10350"/>
        <dbReference type="Rhea" id="RHEA-COMP:14399"/>
        <dbReference type="ChEBI" id="CHEBI:15377"/>
        <dbReference type="ChEBI" id="CHEBI:15378"/>
        <dbReference type="ChEBI" id="CHEBI:15379"/>
        <dbReference type="ChEBI" id="CHEBI:29033"/>
        <dbReference type="ChEBI" id="CHEBI:29034"/>
        <dbReference type="EC" id="7.1.1.9"/>
    </reaction>
    <physiologicalReaction direction="left-to-right" evidence="2">
        <dbReference type="Rhea" id="RHEA:11437"/>
    </physiologicalReaction>
</comment>
<comment type="cofactor">
    <cofactor evidence="3">
        <name>Cu cation</name>
        <dbReference type="ChEBI" id="CHEBI:23378"/>
    </cofactor>
    <text evidence="3">Binds a dinuclear copper A center per subunit.</text>
</comment>
<comment type="subunit">
    <text evidence="1 3">Component of the cytochrome c oxidase (complex IV, CIV), a multisubunit enzyme composed of 14 subunits. The complex is composed of a catalytic core of 3 subunits MT-CO1, MT-CO2 and MT-CO3, encoded in the mitochondrial DNA, and 11 supernumerary subunits COX4I, COX5A, COX5B, COX6A, COX6B, COX6C, COX7A, COX7B, COX7C, COX8 and NDUFA4, which are encoded in the nuclear genome. The complex exists as a monomer or a dimer and forms supercomplexes (SCs) in the inner mitochondrial membrane with NADH-ubiquinone oxidoreductase (complex I, CI) and ubiquinol-cytochrome c oxidoreductase (cytochrome b-c1 complex, complex III, CIII), resulting in different assemblies (supercomplex SCI(1)III(2)IV(1) and megacomplex MCI(2)III(2)IV(2)) (By similarity). Found in a complex with TMEM177, COA6, COX18, COX20, SCO1 and SCO2. Interacts with TMEM177 in a COX20-dependent manner. Interacts with COX20. Interacts with COX16 (By similarity).</text>
</comment>
<comment type="subcellular location">
    <subcellularLocation>
        <location evidence="3">Mitochondrion inner membrane</location>
        <topology evidence="3">Multi-pass membrane protein</topology>
    </subcellularLocation>
</comment>
<comment type="similarity">
    <text evidence="4">Belongs to the cytochrome c oxidase subunit 2 family.</text>
</comment>
<keyword id="KW-0186">Copper</keyword>
<keyword id="KW-0249">Electron transport</keyword>
<keyword id="KW-0472">Membrane</keyword>
<keyword id="KW-0496">Mitochondrion</keyword>
<keyword id="KW-0999">Mitochondrion inner membrane</keyword>
<keyword id="KW-0679">Respiratory chain</keyword>
<keyword id="KW-1278">Translocase</keyword>
<keyword id="KW-0812">Transmembrane</keyword>
<keyword id="KW-1133">Transmembrane helix</keyword>
<keyword id="KW-0813">Transport</keyword>
<feature type="chain" id="PRO_0000183684" description="Cytochrome c oxidase subunit 2">
    <location>
        <begin position="1"/>
        <end position="64" status="greater than"/>
    </location>
</feature>
<feature type="topological domain" description="Mitochondrial intermembrane" evidence="3">
    <location>
        <begin position="1"/>
        <end position="14"/>
    </location>
</feature>
<feature type="transmembrane region" description="Helical; Name=I" evidence="3">
    <location>
        <begin position="15"/>
        <end position="45"/>
    </location>
</feature>
<feature type="topological domain" description="Mitochondrial matrix" evidence="3">
    <location>
        <begin position="46"/>
        <end position="64" status="greater than"/>
    </location>
</feature>
<feature type="non-terminal residue">
    <location>
        <position position="64"/>
    </location>
</feature>
<dbReference type="EC" id="7.1.1.9"/>
<dbReference type="EMBL" id="M64920">
    <property type="protein sequence ID" value="AAB01482.1"/>
    <property type="status" value="ALT_SEQ"/>
    <property type="molecule type" value="Genomic_DNA"/>
</dbReference>
<dbReference type="GO" id="GO:0005743">
    <property type="term" value="C:mitochondrial inner membrane"/>
    <property type="evidence" value="ECO:0007669"/>
    <property type="project" value="UniProtKB-SubCell"/>
</dbReference>
<dbReference type="GO" id="GO:0045277">
    <property type="term" value="C:respiratory chain complex IV"/>
    <property type="evidence" value="ECO:0000250"/>
    <property type="project" value="UniProtKB"/>
</dbReference>
<dbReference type="GO" id="GO:0004129">
    <property type="term" value="F:cytochrome-c oxidase activity"/>
    <property type="evidence" value="ECO:0007669"/>
    <property type="project" value="UniProtKB-EC"/>
</dbReference>
<dbReference type="GO" id="GO:0022900">
    <property type="term" value="P:electron transport chain"/>
    <property type="evidence" value="ECO:0007669"/>
    <property type="project" value="InterPro"/>
</dbReference>
<dbReference type="FunFam" id="1.10.287.90:FF:000001">
    <property type="entry name" value="Cytochrome c oxidase subunit 2"/>
    <property type="match status" value="1"/>
</dbReference>
<dbReference type="Gene3D" id="1.10.287.90">
    <property type="match status" value="1"/>
</dbReference>
<dbReference type="InterPro" id="IPR011759">
    <property type="entry name" value="Cyt_c_oxidase_su2_TM_dom"/>
</dbReference>
<dbReference type="InterPro" id="IPR036257">
    <property type="entry name" value="Cyt_c_oxidase_su2_TM_sf"/>
</dbReference>
<dbReference type="Pfam" id="PF02790">
    <property type="entry name" value="COX2_TM"/>
    <property type="match status" value="1"/>
</dbReference>
<dbReference type="SUPFAM" id="SSF81464">
    <property type="entry name" value="Cytochrome c oxidase subunit II-like, transmembrane region"/>
    <property type="match status" value="1"/>
</dbReference>
<dbReference type="PROSITE" id="PS50999">
    <property type="entry name" value="COX2_TM"/>
    <property type="match status" value="1"/>
</dbReference>
<evidence type="ECO:0000250" key="1">
    <source>
        <dbReference type="UniProtKB" id="P00403"/>
    </source>
</evidence>
<evidence type="ECO:0000250" key="2">
    <source>
        <dbReference type="UniProtKB" id="P00410"/>
    </source>
</evidence>
<evidence type="ECO:0000250" key="3">
    <source>
        <dbReference type="UniProtKB" id="P68530"/>
    </source>
</evidence>
<evidence type="ECO:0000305" key="4"/>
<proteinExistence type="inferred from homology"/>
<name>COX2_SCAPL</name>